<feature type="chain" id="PRO_0000282956" description="Keratin, type I cytoskeletal 12">
    <location>
        <begin position="1"/>
        <end position="456"/>
    </location>
</feature>
<feature type="domain" description="IF rod" evidence="5">
    <location>
        <begin position="115"/>
        <end position="402"/>
    </location>
</feature>
<feature type="region of interest" description="Head" evidence="4">
    <location>
        <begin position="1"/>
        <end position="114"/>
    </location>
</feature>
<feature type="region of interest" description="Disordered" evidence="6">
    <location>
        <begin position="1"/>
        <end position="25"/>
    </location>
</feature>
<feature type="region of interest" description="Coil 1A" evidence="4">
    <location>
        <begin position="115"/>
        <end position="150"/>
    </location>
</feature>
<feature type="region of interest" description="Linker 1" evidence="4">
    <location>
        <begin position="154"/>
        <end position="171"/>
    </location>
</feature>
<feature type="region of interest" description="Coil 1B" evidence="4">
    <location>
        <begin position="172"/>
        <end position="263"/>
    </location>
</feature>
<feature type="region of interest" description="Linker 12" evidence="4">
    <location>
        <begin position="264"/>
        <end position="286"/>
    </location>
</feature>
<feature type="region of interest" description="Coil 2" evidence="4">
    <location>
        <begin position="287"/>
        <end position="397"/>
    </location>
</feature>
<feature type="region of interest" description="Tail" evidence="4">
    <location>
        <begin position="398"/>
        <end position="456"/>
    </location>
</feature>
<feature type="region of interest" description="Disordered" evidence="6">
    <location>
        <begin position="405"/>
        <end position="430"/>
    </location>
</feature>
<feature type="compositionally biased region" description="Polar residues" evidence="6">
    <location>
        <begin position="1"/>
        <end position="19"/>
    </location>
</feature>
<feature type="compositionally biased region" description="Polar residues" evidence="6">
    <location>
        <begin position="408"/>
        <end position="421"/>
    </location>
</feature>
<keyword id="KW-0175">Coiled coil</keyword>
<keyword id="KW-0403">Intermediate filament</keyword>
<keyword id="KW-0416">Keratin</keyword>
<keyword id="KW-1185">Reference proteome</keyword>
<accession>Q6IFW5</accession>
<evidence type="ECO:0000250" key="1"/>
<evidence type="ECO:0000250" key="2">
    <source>
        <dbReference type="UniProtKB" id="Q64291"/>
    </source>
</evidence>
<evidence type="ECO:0000250" key="3">
    <source>
        <dbReference type="UniProtKB" id="Q99456"/>
    </source>
</evidence>
<evidence type="ECO:0000255" key="4"/>
<evidence type="ECO:0000255" key="5">
    <source>
        <dbReference type="PROSITE-ProRule" id="PRU01188"/>
    </source>
</evidence>
<evidence type="ECO:0000256" key="6">
    <source>
        <dbReference type="SAM" id="MobiDB-lite"/>
    </source>
</evidence>
<evidence type="ECO:0000269" key="7">
    <source>
    </source>
</evidence>
<evidence type="ECO:0000305" key="8"/>
<evidence type="ECO:0000312" key="9">
    <source>
        <dbReference type="EMBL" id="DAA04467.1"/>
    </source>
</evidence>
<evidence type="ECO:0000312" key="10">
    <source>
        <dbReference type="RGD" id="1304805"/>
    </source>
</evidence>
<comment type="function">
    <text evidence="2">Involved in corneal epithelium organization, integrity and corneal keratin expression.</text>
</comment>
<comment type="subunit">
    <text evidence="1">Heterotetramer of two type I and two type II keratins. Keratin-3 associates with keratin-12 (By similarity).</text>
</comment>
<comment type="miscellaneous">
    <text evidence="8">There are two types of cytoskeletal and microfibrillar keratin: I (acidic; 40-55 kDa) and II (neutral to basic; 56-70 kDa).</text>
</comment>
<comment type="similarity">
    <text evidence="5">Belongs to the intermediate filament family.</text>
</comment>
<name>K1C12_RAT</name>
<protein>
    <recommendedName>
        <fullName>Keratin, type I cytoskeletal 12</fullName>
    </recommendedName>
    <alternativeName>
        <fullName>Cytokeratin-12</fullName>
        <shortName>CK-12</shortName>
    </alternativeName>
    <alternativeName>
        <fullName>Keratin-12</fullName>
        <shortName>K12</shortName>
    </alternativeName>
    <alternativeName>
        <fullName>Type I keratin Ka12</fullName>
    </alternativeName>
</protein>
<dbReference type="EMBL" id="AABR03075828">
    <property type="status" value="NOT_ANNOTATED_CDS"/>
    <property type="molecule type" value="Genomic_DNA"/>
</dbReference>
<dbReference type="EMBL" id="BK004033">
    <property type="protein sequence ID" value="DAA04467.1"/>
    <property type="molecule type" value="mRNA"/>
</dbReference>
<dbReference type="RefSeq" id="NP_001008761.1">
    <property type="nucleotide sequence ID" value="NM_001008761.1"/>
</dbReference>
<dbReference type="SMR" id="Q6IFW5"/>
<dbReference type="FunCoup" id="Q6IFW5">
    <property type="interactions" value="116"/>
</dbReference>
<dbReference type="STRING" id="10116.ENSRNOP00000073050"/>
<dbReference type="PhosphoSitePlus" id="Q6IFW5"/>
<dbReference type="PaxDb" id="10116-ENSRNOP00000016337"/>
<dbReference type="AGR" id="RGD:1304805"/>
<dbReference type="RGD" id="1304805">
    <property type="gene designation" value="Krt12"/>
</dbReference>
<dbReference type="eggNOG" id="ENOG502QTM6">
    <property type="taxonomic scope" value="Eukaryota"/>
</dbReference>
<dbReference type="InParanoid" id="Q6IFW5"/>
<dbReference type="Reactome" id="R-RNO-6805567">
    <property type="pathway name" value="Keratinization"/>
</dbReference>
<dbReference type="Reactome" id="R-RNO-6809371">
    <property type="pathway name" value="Formation of the cornified envelope"/>
</dbReference>
<dbReference type="PRO" id="PR:Q6IFW5"/>
<dbReference type="Proteomes" id="UP000002494">
    <property type="component" value="Unplaced"/>
</dbReference>
<dbReference type="GO" id="GO:0005856">
    <property type="term" value="C:cytoskeleton"/>
    <property type="evidence" value="ECO:0000318"/>
    <property type="project" value="GO_Central"/>
</dbReference>
<dbReference type="GO" id="GO:0005882">
    <property type="term" value="C:intermediate filament"/>
    <property type="evidence" value="ECO:0007669"/>
    <property type="project" value="UniProtKB-KW"/>
</dbReference>
<dbReference type="GO" id="GO:0005198">
    <property type="term" value="F:structural molecule activity"/>
    <property type="evidence" value="ECO:0007669"/>
    <property type="project" value="InterPro"/>
</dbReference>
<dbReference type="GO" id="GO:0061303">
    <property type="term" value="P:cornea development in camera-type eye"/>
    <property type="evidence" value="ECO:0000250"/>
    <property type="project" value="UniProtKB"/>
</dbReference>
<dbReference type="GO" id="GO:0030855">
    <property type="term" value="P:epithelial cell differentiation"/>
    <property type="evidence" value="ECO:0000318"/>
    <property type="project" value="GO_Central"/>
</dbReference>
<dbReference type="GO" id="GO:0060429">
    <property type="term" value="P:epithelium development"/>
    <property type="evidence" value="ECO:0000266"/>
    <property type="project" value="RGD"/>
</dbReference>
<dbReference type="GO" id="GO:0045109">
    <property type="term" value="P:intermediate filament organization"/>
    <property type="evidence" value="ECO:0000318"/>
    <property type="project" value="GO_Central"/>
</dbReference>
<dbReference type="GO" id="GO:0002009">
    <property type="term" value="P:morphogenesis of an epithelium"/>
    <property type="evidence" value="ECO:0000250"/>
    <property type="project" value="UniProtKB"/>
</dbReference>
<dbReference type="FunFam" id="1.20.5.1160:FF:000002">
    <property type="entry name" value="Type I keratin 10"/>
    <property type="match status" value="1"/>
</dbReference>
<dbReference type="FunFam" id="1.20.5.170:FF:000002">
    <property type="entry name" value="Type I keratin KA11"/>
    <property type="match status" value="1"/>
</dbReference>
<dbReference type="Gene3D" id="1.20.5.170">
    <property type="match status" value="1"/>
</dbReference>
<dbReference type="Gene3D" id="1.20.5.1160">
    <property type="entry name" value="Vasodilator-stimulated phosphoprotein"/>
    <property type="match status" value="1"/>
</dbReference>
<dbReference type="InterPro" id="IPR018039">
    <property type="entry name" value="IF_conserved"/>
</dbReference>
<dbReference type="InterPro" id="IPR039008">
    <property type="entry name" value="IF_rod_dom"/>
</dbReference>
<dbReference type="InterPro" id="IPR002957">
    <property type="entry name" value="Keratin_I"/>
</dbReference>
<dbReference type="PANTHER" id="PTHR23239">
    <property type="entry name" value="INTERMEDIATE FILAMENT"/>
    <property type="match status" value="1"/>
</dbReference>
<dbReference type="PANTHER" id="PTHR23239:SF369">
    <property type="entry name" value="KERATIN, TYPE I CYTOSKELETAL 12"/>
    <property type="match status" value="1"/>
</dbReference>
<dbReference type="Pfam" id="PF00038">
    <property type="entry name" value="Filament"/>
    <property type="match status" value="2"/>
</dbReference>
<dbReference type="PRINTS" id="PR01248">
    <property type="entry name" value="TYPE1KERATIN"/>
</dbReference>
<dbReference type="SMART" id="SM01391">
    <property type="entry name" value="Filament"/>
    <property type="match status" value="1"/>
</dbReference>
<dbReference type="SUPFAM" id="SSF64593">
    <property type="entry name" value="Intermediate filament protein, coiled coil region"/>
    <property type="match status" value="2"/>
</dbReference>
<dbReference type="PROSITE" id="PS00226">
    <property type="entry name" value="IF_ROD_1"/>
    <property type="match status" value="1"/>
</dbReference>
<dbReference type="PROSITE" id="PS51842">
    <property type="entry name" value="IF_ROD_2"/>
    <property type="match status" value="1"/>
</dbReference>
<proteinExistence type="inferred from homology"/>
<gene>
    <name evidence="3" type="primary">Krt12</name>
    <name evidence="9" type="synonym">Ka12</name>
    <name evidence="10" type="synonym">Krt1-12</name>
</gene>
<sequence length="456" mass="48820">MSLSVRTSALSRRSSSQNGVAGRPWGASASSVACGYGGTASGFGVGCGGLLSAASMFGSSSGFSGGSTGCSPGLGTAYGGPLGAGVGGMGIGGSSGGGSLCIFSGNDGGLLSGSEKETMQNLNDRLASYLGKVRALEEANAELENKIREWYETRRTGDSGSQSDYSKYYPLIEDLKNKIISASVSNAQLLLQIDNARLAAEDFRMKYENELALRQTVEADINGLRRVLDELTLARADLEAQTENLTEELAYMKKNHEEELQSFQAGGPGEVNVEMDAAPGVDLTKSGELRKEINSNTEQLQSSKSEVTDLKRMVQNLEIELQSQLAMKSSLEGSLAETEGGYCCQLSQMQQLIGSLEEQLQQLRADAERQNEDHQRLLGVKARLEMEIETYRRLLEGDTQGDGFDESLSLTVSKPQAPSVDSSKDPNKTRKIKTVVQEIVNGEVVSSQVQELEEAM</sequence>
<reference evidence="8" key="1">
    <citation type="journal article" date="2004" name="Nature">
        <title>Genome sequence of the Brown Norway rat yields insights into mammalian evolution.</title>
        <authorList>
            <person name="Gibbs R.A."/>
            <person name="Weinstock G.M."/>
            <person name="Metzker M.L."/>
            <person name="Muzny D.M."/>
            <person name="Sodergren E.J."/>
            <person name="Scherer S."/>
            <person name="Scott G."/>
            <person name="Steffen D."/>
            <person name="Worley K.C."/>
            <person name="Burch P.E."/>
            <person name="Okwuonu G."/>
            <person name="Hines S."/>
            <person name="Lewis L."/>
            <person name="Deramo C."/>
            <person name="Delgado O."/>
            <person name="Dugan-Rocha S."/>
            <person name="Miner G."/>
            <person name="Morgan M."/>
            <person name="Hawes A."/>
            <person name="Gill R."/>
            <person name="Holt R.A."/>
            <person name="Adams M.D."/>
            <person name="Amanatides P.G."/>
            <person name="Baden-Tillson H."/>
            <person name="Barnstead M."/>
            <person name="Chin S."/>
            <person name="Evans C.A."/>
            <person name="Ferriera S."/>
            <person name="Fosler C."/>
            <person name="Glodek A."/>
            <person name="Gu Z."/>
            <person name="Jennings D."/>
            <person name="Kraft C.L."/>
            <person name="Nguyen T."/>
            <person name="Pfannkoch C.M."/>
            <person name="Sitter C."/>
            <person name="Sutton G.G."/>
            <person name="Venter J.C."/>
            <person name="Woodage T."/>
            <person name="Smith D."/>
            <person name="Lee H.-M."/>
            <person name="Gustafson E."/>
            <person name="Cahill P."/>
            <person name="Kana A."/>
            <person name="Doucette-Stamm L."/>
            <person name="Weinstock K."/>
            <person name="Fechtel K."/>
            <person name="Weiss R.B."/>
            <person name="Dunn D.M."/>
            <person name="Green E.D."/>
            <person name="Blakesley R.W."/>
            <person name="Bouffard G.G."/>
            <person name="De Jong P.J."/>
            <person name="Osoegawa K."/>
            <person name="Zhu B."/>
            <person name="Marra M."/>
            <person name="Schein J."/>
            <person name="Bosdet I."/>
            <person name="Fjell C."/>
            <person name="Jones S."/>
            <person name="Krzywinski M."/>
            <person name="Mathewson C."/>
            <person name="Siddiqui A."/>
            <person name="Wye N."/>
            <person name="McPherson J."/>
            <person name="Zhao S."/>
            <person name="Fraser C.M."/>
            <person name="Shetty J."/>
            <person name="Shatsman S."/>
            <person name="Geer K."/>
            <person name="Chen Y."/>
            <person name="Abramzon S."/>
            <person name="Nierman W.C."/>
            <person name="Havlak P.H."/>
            <person name="Chen R."/>
            <person name="Durbin K.J."/>
            <person name="Egan A."/>
            <person name="Ren Y."/>
            <person name="Song X.-Z."/>
            <person name="Li B."/>
            <person name="Liu Y."/>
            <person name="Qin X."/>
            <person name="Cawley S."/>
            <person name="Cooney A.J."/>
            <person name="D'Souza L.M."/>
            <person name="Martin K."/>
            <person name="Wu J.Q."/>
            <person name="Gonzalez-Garay M.L."/>
            <person name="Jackson A.R."/>
            <person name="Kalafus K.J."/>
            <person name="McLeod M.P."/>
            <person name="Milosavljevic A."/>
            <person name="Virk D."/>
            <person name="Volkov A."/>
            <person name="Wheeler D.A."/>
            <person name="Zhang Z."/>
            <person name="Bailey J.A."/>
            <person name="Eichler E.E."/>
            <person name="Tuzun E."/>
            <person name="Birney E."/>
            <person name="Mongin E."/>
            <person name="Ureta-Vidal A."/>
            <person name="Woodwark C."/>
            <person name="Zdobnov E."/>
            <person name="Bork P."/>
            <person name="Suyama M."/>
            <person name="Torrents D."/>
            <person name="Alexandersson M."/>
            <person name="Trask B.J."/>
            <person name="Young J.M."/>
            <person name="Huang H."/>
            <person name="Wang H."/>
            <person name="Xing H."/>
            <person name="Daniels S."/>
            <person name="Gietzen D."/>
            <person name="Schmidt J."/>
            <person name="Stevens K."/>
            <person name="Vitt U."/>
            <person name="Wingrove J."/>
            <person name="Camara F."/>
            <person name="Mar Alba M."/>
            <person name="Abril J.F."/>
            <person name="Guigo R."/>
            <person name="Smit A."/>
            <person name="Dubchak I."/>
            <person name="Rubin E.M."/>
            <person name="Couronne O."/>
            <person name="Poliakov A."/>
            <person name="Huebner N."/>
            <person name="Ganten D."/>
            <person name="Goesele C."/>
            <person name="Hummel O."/>
            <person name="Kreitler T."/>
            <person name="Lee Y.-A."/>
            <person name="Monti J."/>
            <person name="Schulz H."/>
            <person name="Zimdahl H."/>
            <person name="Himmelbauer H."/>
            <person name="Lehrach H."/>
            <person name="Jacob H.J."/>
            <person name="Bromberg S."/>
            <person name="Gullings-Handley J."/>
            <person name="Jensen-Seaman M.I."/>
            <person name="Kwitek A.E."/>
            <person name="Lazar J."/>
            <person name="Pasko D."/>
            <person name="Tonellato P.J."/>
            <person name="Twigger S."/>
            <person name="Ponting C.P."/>
            <person name="Duarte J.M."/>
            <person name="Rice S."/>
            <person name="Goodstadt L."/>
            <person name="Beatson S.A."/>
            <person name="Emes R.D."/>
            <person name="Winter E.E."/>
            <person name="Webber C."/>
            <person name="Brandt P."/>
            <person name="Nyakatura G."/>
            <person name="Adetobi M."/>
            <person name="Chiaromonte F."/>
            <person name="Elnitski L."/>
            <person name="Eswara P."/>
            <person name="Hardison R.C."/>
            <person name="Hou M."/>
            <person name="Kolbe D."/>
            <person name="Makova K."/>
            <person name="Miller W."/>
            <person name="Nekrutenko A."/>
            <person name="Riemer C."/>
            <person name="Schwartz S."/>
            <person name="Taylor J."/>
            <person name="Yang S."/>
            <person name="Zhang Y."/>
            <person name="Lindpaintner K."/>
            <person name="Andrews T.D."/>
            <person name="Caccamo M."/>
            <person name="Clamp M."/>
            <person name="Clarke L."/>
            <person name="Curwen V."/>
            <person name="Durbin R.M."/>
            <person name="Eyras E."/>
            <person name="Searle S.M."/>
            <person name="Cooper G.M."/>
            <person name="Batzoglou S."/>
            <person name="Brudno M."/>
            <person name="Sidow A."/>
            <person name="Stone E.A."/>
            <person name="Payseur B.A."/>
            <person name="Bourque G."/>
            <person name="Lopez-Otin C."/>
            <person name="Puente X.S."/>
            <person name="Chakrabarti K."/>
            <person name="Chatterji S."/>
            <person name="Dewey C."/>
            <person name="Pachter L."/>
            <person name="Bray N."/>
            <person name="Yap V.B."/>
            <person name="Caspi A."/>
            <person name="Tesler G."/>
            <person name="Pevzner P.A."/>
            <person name="Haussler D."/>
            <person name="Roskin K.M."/>
            <person name="Baertsch R."/>
            <person name="Clawson H."/>
            <person name="Furey T.S."/>
            <person name="Hinrichs A.S."/>
            <person name="Karolchik D."/>
            <person name="Kent W.J."/>
            <person name="Rosenbloom K.R."/>
            <person name="Trumbower H."/>
            <person name="Weirauch M."/>
            <person name="Cooper D.N."/>
            <person name="Stenson P.D."/>
            <person name="Ma B."/>
            <person name="Brent M."/>
            <person name="Arumugam M."/>
            <person name="Shteynberg D."/>
            <person name="Copley R.R."/>
            <person name="Taylor M.S."/>
            <person name="Riethman H."/>
            <person name="Mudunuri U."/>
            <person name="Peterson J."/>
            <person name="Guyer M."/>
            <person name="Felsenfeld A."/>
            <person name="Old S."/>
            <person name="Mockrin S."/>
            <person name="Collins F.S."/>
        </authorList>
    </citation>
    <scope>NUCLEOTIDE SEQUENCE [LARGE SCALE GENOMIC DNA]</scope>
    <source>
        <strain evidence="7">Brown Norway</strain>
    </source>
</reference>
<reference evidence="8 9" key="2">
    <citation type="journal article" date="2004" name="Eur. J. Cell Biol.">
        <title>Comprehensive analysis of keratin gene clusters in humans and rodents.</title>
        <authorList>
            <person name="Hesse M."/>
            <person name="Zimek A."/>
            <person name="Weber K."/>
            <person name="Magin T.M."/>
        </authorList>
    </citation>
    <scope>IDENTIFICATION</scope>
</reference>
<organism>
    <name type="scientific">Rattus norvegicus</name>
    <name type="common">Rat</name>
    <dbReference type="NCBI Taxonomy" id="10116"/>
    <lineage>
        <taxon>Eukaryota</taxon>
        <taxon>Metazoa</taxon>
        <taxon>Chordata</taxon>
        <taxon>Craniata</taxon>
        <taxon>Vertebrata</taxon>
        <taxon>Euteleostomi</taxon>
        <taxon>Mammalia</taxon>
        <taxon>Eutheria</taxon>
        <taxon>Euarchontoglires</taxon>
        <taxon>Glires</taxon>
        <taxon>Rodentia</taxon>
        <taxon>Myomorpha</taxon>
        <taxon>Muroidea</taxon>
        <taxon>Muridae</taxon>
        <taxon>Murinae</taxon>
        <taxon>Rattus</taxon>
    </lineage>
</organism>